<feature type="chain" id="PRO_1000019856" description="Serine--tRNA ligase">
    <location>
        <begin position="1"/>
        <end position="425"/>
    </location>
</feature>
<feature type="binding site" evidence="1">
    <location>
        <begin position="233"/>
        <end position="235"/>
    </location>
    <ligand>
        <name>L-serine</name>
        <dbReference type="ChEBI" id="CHEBI:33384"/>
    </ligand>
</feature>
<feature type="binding site" evidence="1">
    <location>
        <begin position="264"/>
        <end position="266"/>
    </location>
    <ligand>
        <name>ATP</name>
        <dbReference type="ChEBI" id="CHEBI:30616"/>
    </ligand>
</feature>
<feature type="binding site" evidence="1">
    <location>
        <position position="287"/>
    </location>
    <ligand>
        <name>L-serine</name>
        <dbReference type="ChEBI" id="CHEBI:33384"/>
    </ligand>
</feature>
<feature type="binding site" evidence="1">
    <location>
        <begin position="351"/>
        <end position="354"/>
    </location>
    <ligand>
        <name>ATP</name>
        <dbReference type="ChEBI" id="CHEBI:30616"/>
    </ligand>
</feature>
<feature type="binding site" evidence="1">
    <location>
        <position position="386"/>
    </location>
    <ligand>
        <name>L-serine</name>
        <dbReference type="ChEBI" id="CHEBI:33384"/>
    </ligand>
</feature>
<gene>
    <name evidence="1" type="primary">serS</name>
    <name type="ordered locus">Tmel_0253</name>
</gene>
<comment type="function">
    <text evidence="1">Catalyzes the attachment of serine to tRNA(Ser). Is also able to aminoacylate tRNA(Sec) with serine, to form the misacylated tRNA L-seryl-tRNA(Sec), which will be further converted into selenocysteinyl-tRNA(Sec).</text>
</comment>
<comment type="catalytic activity">
    <reaction evidence="1">
        <text>tRNA(Ser) + L-serine + ATP = L-seryl-tRNA(Ser) + AMP + diphosphate + H(+)</text>
        <dbReference type="Rhea" id="RHEA:12292"/>
        <dbReference type="Rhea" id="RHEA-COMP:9669"/>
        <dbReference type="Rhea" id="RHEA-COMP:9703"/>
        <dbReference type="ChEBI" id="CHEBI:15378"/>
        <dbReference type="ChEBI" id="CHEBI:30616"/>
        <dbReference type="ChEBI" id="CHEBI:33019"/>
        <dbReference type="ChEBI" id="CHEBI:33384"/>
        <dbReference type="ChEBI" id="CHEBI:78442"/>
        <dbReference type="ChEBI" id="CHEBI:78533"/>
        <dbReference type="ChEBI" id="CHEBI:456215"/>
        <dbReference type="EC" id="6.1.1.11"/>
    </reaction>
</comment>
<comment type="catalytic activity">
    <reaction evidence="1">
        <text>tRNA(Sec) + L-serine + ATP = L-seryl-tRNA(Sec) + AMP + diphosphate + H(+)</text>
        <dbReference type="Rhea" id="RHEA:42580"/>
        <dbReference type="Rhea" id="RHEA-COMP:9742"/>
        <dbReference type="Rhea" id="RHEA-COMP:10128"/>
        <dbReference type="ChEBI" id="CHEBI:15378"/>
        <dbReference type="ChEBI" id="CHEBI:30616"/>
        <dbReference type="ChEBI" id="CHEBI:33019"/>
        <dbReference type="ChEBI" id="CHEBI:33384"/>
        <dbReference type="ChEBI" id="CHEBI:78442"/>
        <dbReference type="ChEBI" id="CHEBI:78533"/>
        <dbReference type="ChEBI" id="CHEBI:456215"/>
        <dbReference type="EC" id="6.1.1.11"/>
    </reaction>
</comment>
<comment type="pathway">
    <text evidence="1">Aminoacyl-tRNA biosynthesis; selenocysteinyl-tRNA(Sec) biosynthesis; L-seryl-tRNA(Sec) from L-serine and tRNA(Sec): step 1/1.</text>
</comment>
<comment type="subunit">
    <text evidence="1">Homodimer. The tRNA molecule binds across the dimer.</text>
</comment>
<comment type="subcellular location">
    <subcellularLocation>
        <location evidence="1">Cytoplasm</location>
    </subcellularLocation>
</comment>
<comment type="domain">
    <text evidence="1">Consists of two distinct domains, a catalytic core and a N-terminal extension that is involved in tRNA binding.</text>
</comment>
<comment type="similarity">
    <text evidence="1">Belongs to the class-II aminoacyl-tRNA synthetase family. Type-1 seryl-tRNA synthetase subfamily.</text>
</comment>
<evidence type="ECO:0000255" key="1">
    <source>
        <dbReference type="HAMAP-Rule" id="MF_00176"/>
    </source>
</evidence>
<proteinExistence type="inferred from homology"/>
<organism>
    <name type="scientific">Thermosipho melanesiensis (strain DSM 12029 / CIP 104789 / BI429)</name>
    <dbReference type="NCBI Taxonomy" id="391009"/>
    <lineage>
        <taxon>Bacteria</taxon>
        <taxon>Thermotogati</taxon>
        <taxon>Thermotogota</taxon>
        <taxon>Thermotogae</taxon>
        <taxon>Thermotogales</taxon>
        <taxon>Fervidobacteriaceae</taxon>
        <taxon>Thermosipho</taxon>
    </lineage>
</organism>
<reference key="1">
    <citation type="submission" date="2007-05" db="EMBL/GenBank/DDBJ databases">
        <title>Complete sequence of Thermosipho melanesiensis BI429.</title>
        <authorList>
            <consortium name="US DOE Joint Genome Institute"/>
            <person name="Copeland A."/>
            <person name="Lucas S."/>
            <person name="Lapidus A."/>
            <person name="Barry K."/>
            <person name="Glavina del Rio T."/>
            <person name="Dalin E."/>
            <person name="Tice H."/>
            <person name="Pitluck S."/>
            <person name="Chertkov O."/>
            <person name="Brettin T."/>
            <person name="Bruce D."/>
            <person name="Detter J.C."/>
            <person name="Han C."/>
            <person name="Schmutz J."/>
            <person name="Larimer F."/>
            <person name="Land M."/>
            <person name="Hauser L."/>
            <person name="Kyrpides N."/>
            <person name="Mikhailova N."/>
            <person name="Nelson K."/>
            <person name="Gogarten J.P."/>
            <person name="Noll K."/>
            <person name="Richardson P."/>
        </authorList>
    </citation>
    <scope>NUCLEOTIDE SEQUENCE [LARGE SCALE GENOMIC DNA]</scope>
    <source>
        <strain>DSM 12029 / CIP 104789 / BI429</strain>
    </source>
</reference>
<sequence>MIDIKLLRKEPEIFYNALEKRAMDKEIIDRILVLDREWRSILAEVNNLKAKRNELSKMVAKLKAEKKDIEAEELIKESKGIGEKIKKLDERQKRLEEEMKNLALEIPNIPHESVPVGKDETENVEVRKWGTPRKFDFEPKAHWDLGPELGLIDFERAAKLSGARFTVMYGLLAKLERALIQFMLDVHTKEHGYTEVWVPHLVRREVMIWTGKLPKFEDESYNTKKDDLFLIPTAEVPITALHAEEILKEKELPKKYVSYTSCYRREAGSYGKDVRGMIRQHQFDKVELVWFTKEEESFNALEQLTRDAERILQLLELPYRVVNLCTGDLGFASAKTYDIEVWLPSYNDYKEVSSCSNITDFQARRANIKYRGSDNKTHFVHTLNGSGLAIGRTLVAIMENYQNEDGTITIPKVLVPYMGVEKISI</sequence>
<dbReference type="EC" id="6.1.1.11" evidence="1"/>
<dbReference type="EMBL" id="CP000716">
    <property type="protein sequence ID" value="ABR30127.1"/>
    <property type="molecule type" value="Genomic_DNA"/>
</dbReference>
<dbReference type="RefSeq" id="WP_012056488.1">
    <property type="nucleotide sequence ID" value="NC_009616.1"/>
</dbReference>
<dbReference type="SMR" id="A6LJM6"/>
<dbReference type="STRING" id="391009.Tmel_0253"/>
<dbReference type="KEGG" id="tme:Tmel_0253"/>
<dbReference type="eggNOG" id="COG0172">
    <property type="taxonomic scope" value="Bacteria"/>
</dbReference>
<dbReference type="HOGENOM" id="CLU_023797_1_1_0"/>
<dbReference type="OrthoDB" id="9804647at2"/>
<dbReference type="UniPathway" id="UPA00906">
    <property type="reaction ID" value="UER00895"/>
</dbReference>
<dbReference type="Proteomes" id="UP000001110">
    <property type="component" value="Chromosome"/>
</dbReference>
<dbReference type="GO" id="GO:0005737">
    <property type="term" value="C:cytoplasm"/>
    <property type="evidence" value="ECO:0007669"/>
    <property type="project" value="UniProtKB-SubCell"/>
</dbReference>
<dbReference type="GO" id="GO:0005524">
    <property type="term" value="F:ATP binding"/>
    <property type="evidence" value="ECO:0007669"/>
    <property type="project" value="UniProtKB-UniRule"/>
</dbReference>
<dbReference type="GO" id="GO:0004828">
    <property type="term" value="F:serine-tRNA ligase activity"/>
    <property type="evidence" value="ECO:0007669"/>
    <property type="project" value="UniProtKB-UniRule"/>
</dbReference>
<dbReference type="GO" id="GO:0016260">
    <property type="term" value="P:selenocysteine biosynthetic process"/>
    <property type="evidence" value="ECO:0007669"/>
    <property type="project" value="UniProtKB-UniRule"/>
</dbReference>
<dbReference type="GO" id="GO:0006434">
    <property type="term" value="P:seryl-tRNA aminoacylation"/>
    <property type="evidence" value="ECO:0007669"/>
    <property type="project" value="UniProtKB-UniRule"/>
</dbReference>
<dbReference type="CDD" id="cd00770">
    <property type="entry name" value="SerRS_core"/>
    <property type="match status" value="1"/>
</dbReference>
<dbReference type="Gene3D" id="3.30.930.10">
    <property type="entry name" value="Bira Bifunctional Protein, Domain 2"/>
    <property type="match status" value="1"/>
</dbReference>
<dbReference type="Gene3D" id="1.10.287.40">
    <property type="entry name" value="Serine-tRNA synthetase, tRNA binding domain"/>
    <property type="match status" value="1"/>
</dbReference>
<dbReference type="HAMAP" id="MF_00176">
    <property type="entry name" value="Ser_tRNA_synth_type1"/>
    <property type="match status" value="1"/>
</dbReference>
<dbReference type="InterPro" id="IPR002314">
    <property type="entry name" value="aa-tRNA-synt_IIb"/>
</dbReference>
<dbReference type="InterPro" id="IPR006195">
    <property type="entry name" value="aa-tRNA-synth_II"/>
</dbReference>
<dbReference type="InterPro" id="IPR045864">
    <property type="entry name" value="aa-tRNA-synth_II/BPL/LPL"/>
</dbReference>
<dbReference type="InterPro" id="IPR002317">
    <property type="entry name" value="Ser-tRNA-ligase_type_1"/>
</dbReference>
<dbReference type="InterPro" id="IPR015866">
    <property type="entry name" value="Ser-tRNA-synth_1_N"/>
</dbReference>
<dbReference type="InterPro" id="IPR042103">
    <property type="entry name" value="SerRS_1_N_sf"/>
</dbReference>
<dbReference type="InterPro" id="IPR033729">
    <property type="entry name" value="SerRS_core"/>
</dbReference>
<dbReference type="InterPro" id="IPR010978">
    <property type="entry name" value="tRNA-bd_arm"/>
</dbReference>
<dbReference type="NCBIfam" id="TIGR00414">
    <property type="entry name" value="serS"/>
    <property type="match status" value="1"/>
</dbReference>
<dbReference type="PANTHER" id="PTHR43697:SF1">
    <property type="entry name" value="SERINE--TRNA LIGASE"/>
    <property type="match status" value="1"/>
</dbReference>
<dbReference type="PANTHER" id="PTHR43697">
    <property type="entry name" value="SERYL-TRNA SYNTHETASE"/>
    <property type="match status" value="1"/>
</dbReference>
<dbReference type="Pfam" id="PF02403">
    <property type="entry name" value="Seryl_tRNA_N"/>
    <property type="match status" value="1"/>
</dbReference>
<dbReference type="Pfam" id="PF00587">
    <property type="entry name" value="tRNA-synt_2b"/>
    <property type="match status" value="1"/>
</dbReference>
<dbReference type="PIRSF" id="PIRSF001529">
    <property type="entry name" value="Ser-tRNA-synth_IIa"/>
    <property type="match status" value="1"/>
</dbReference>
<dbReference type="PRINTS" id="PR00981">
    <property type="entry name" value="TRNASYNTHSER"/>
</dbReference>
<dbReference type="SUPFAM" id="SSF55681">
    <property type="entry name" value="Class II aaRS and biotin synthetases"/>
    <property type="match status" value="1"/>
</dbReference>
<dbReference type="SUPFAM" id="SSF46589">
    <property type="entry name" value="tRNA-binding arm"/>
    <property type="match status" value="1"/>
</dbReference>
<dbReference type="PROSITE" id="PS50862">
    <property type="entry name" value="AA_TRNA_LIGASE_II"/>
    <property type="match status" value="1"/>
</dbReference>
<keyword id="KW-0030">Aminoacyl-tRNA synthetase</keyword>
<keyword id="KW-0067">ATP-binding</keyword>
<keyword id="KW-0963">Cytoplasm</keyword>
<keyword id="KW-0436">Ligase</keyword>
<keyword id="KW-0547">Nucleotide-binding</keyword>
<keyword id="KW-0648">Protein biosynthesis</keyword>
<name>SYS_THEM4</name>
<accession>A6LJM6</accession>
<protein>
    <recommendedName>
        <fullName evidence="1">Serine--tRNA ligase</fullName>
        <ecNumber evidence="1">6.1.1.11</ecNumber>
    </recommendedName>
    <alternativeName>
        <fullName evidence="1">Seryl-tRNA synthetase</fullName>
        <shortName evidence="1">SerRS</shortName>
    </alternativeName>
    <alternativeName>
        <fullName evidence="1">Seryl-tRNA(Ser/Sec) synthetase</fullName>
    </alternativeName>
</protein>